<name>FMT_RUBXD</name>
<accession>Q1AVZ9</accession>
<gene>
    <name evidence="1" type="primary">fmt</name>
    <name type="ordered locus">Rxyl_1467</name>
</gene>
<protein>
    <recommendedName>
        <fullName evidence="1">Methionyl-tRNA formyltransferase</fullName>
        <ecNumber evidence="1">2.1.2.9</ecNumber>
    </recommendedName>
</protein>
<keyword id="KW-0648">Protein biosynthesis</keyword>
<keyword id="KW-1185">Reference proteome</keyword>
<keyword id="KW-0808">Transferase</keyword>
<reference key="1">
    <citation type="submission" date="2006-06" db="EMBL/GenBank/DDBJ databases">
        <title>Complete sequence of Rubrobacter xylanophilus DSM 9941.</title>
        <authorList>
            <consortium name="US DOE Joint Genome Institute"/>
            <person name="Copeland A."/>
            <person name="Lucas S."/>
            <person name="Lapidus A."/>
            <person name="Barry K."/>
            <person name="Detter J.C."/>
            <person name="Glavina del Rio T."/>
            <person name="Hammon N."/>
            <person name="Israni S."/>
            <person name="Dalin E."/>
            <person name="Tice H."/>
            <person name="Pitluck S."/>
            <person name="Munk A.C."/>
            <person name="Brettin T."/>
            <person name="Bruce D."/>
            <person name="Han C."/>
            <person name="Tapia R."/>
            <person name="Gilna P."/>
            <person name="Schmutz J."/>
            <person name="Larimer F."/>
            <person name="Land M."/>
            <person name="Hauser L."/>
            <person name="Kyrpides N."/>
            <person name="Lykidis A."/>
            <person name="da Costa M.S."/>
            <person name="Rainey F.A."/>
            <person name="Empadinhas N."/>
            <person name="Jolivet E."/>
            <person name="Battista J.R."/>
            <person name="Richardson P."/>
        </authorList>
    </citation>
    <scope>NUCLEOTIDE SEQUENCE [LARGE SCALE GENOMIC DNA]</scope>
    <source>
        <strain>DSM 9941 / JCM 11954 / NBRC 16129 / PRD-1</strain>
    </source>
</reference>
<evidence type="ECO:0000255" key="1">
    <source>
        <dbReference type="HAMAP-Rule" id="MF_00182"/>
    </source>
</evidence>
<dbReference type="EC" id="2.1.2.9" evidence="1"/>
<dbReference type="EMBL" id="CP000386">
    <property type="protein sequence ID" value="ABG04429.1"/>
    <property type="molecule type" value="Genomic_DNA"/>
</dbReference>
<dbReference type="SMR" id="Q1AVZ9"/>
<dbReference type="STRING" id="266117.Rxyl_1467"/>
<dbReference type="KEGG" id="rxy:Rxyl_1467"/>
<dbReference type="eggNOG" id="COG0223">
    <property type="taxonomic scope" value="Bacteria"/>
</dbReference>
<dbReference type="HOGENOM" id="CLU_033347_2_0_11"/>
<dbReference type="OrthoDB" id="9802815at2"/>
<dbReference type="PhylomeDB" id="Q1AVZ9"/>
<dbReference type="Proteomes" id="UP000006637">
    <property type="component" value="Chromosome"/>
</dbReference>
<dbReference type="GO" id="GO:0005829">
    <property type="term" value="C:cytosol"/>
    <property type="evidence" value="ECO:0007669"/>
    <property type="project" value="TreeGrafter"/>
</dbReference>
<dbReference type="GO" id="GO:0004479">
    <property type="term" value="F:methionyl-tRNA formyltransferase activity"/>
    <property type="evidence" value="ECO:0007669"/>
    <property type="project" value="UniProtKB-UniRule"/>
</dbReference>
<dbReference type="CDD" id="cd08646">
    <property type="entry name" value="FMT_core_Met-tRNA-FMT_N"/>
    <property type="match status" value="1"/>
</dbReference>
<dbReference type="CDD" id="cd08704">
    <property type="entry name" value="Met_tRNA_FMT_C"/>
    <property type="match status" value="1"/>
</dbReference>
<dbReference type="Gene3D" id="3.40.50.12230">
    <property type="match status" value="1"/>
</dbReference>
<dbReference type="HAMAP" id="MF_00182">
    <property type="entry name" value="Formyl_trans"/>
    <property type="match status" value="1"/>
</dbReference>
<dbReference type="InterPro" id="IPR005794">
    <property type="entry name" value="Fmt"/>
</dbReference>
<dbReference type="InterPro" id="IPR005793">
    <property type="entry name" value="Formyl_trans_C"/>
</dbReference>
<dbReference type="InterPro" id="IPR002376">
    <property type="entry name" value="Formyl_transf_N"/>
</dbReference>
<dbReference type="InterPro" id="IPR036477">
    <property type="entry name" value="Formyl_transf_N_sf"/>
</dbReference>
<dbReference type="InterPro" id="IPR011034">
    <property type="entry name" value="Formyl_transferase-like_C_sf"/>
</dbReference>
<dbReference type="InterPro" id="IPR001555">
    <property type="entry name" value="GART_AS"/>
</dbReference>
<dbReference type="InterPro" id="IPR044135">
    <property type="entry name" value="Met-tRNA-FMT_C"/>
</dbReference>
<dbReference type="InterPro" id="IPR041711">
    <property type="entry name" value="Met-tRNA-FMT_N"/>
</dbReference>
<dbReference type="NCBIfam" id="TIGR00460">
    <property type="entry name" value="fmt"/>
    <property type="match status" value="1"/>
</dbReference>
<dbReference type="PANTHER" id="PTHR11138">
    <property type="entry name" value="METHIONYL-TRNA FORMYLTRANSFERASE"/>
    <property type="match status" value="1"/>
</dbReference>
<dbReference type="PANTHER" id="PTHR11138:SF5">
    <property type="entry name" value="METHIONYL-TRNA FORMYLTRANSFERASE, MITOCHONDRIAL"/>
    <property type="match status" value="1"/>
</dbReference>
<dbReference type="Pfam" id="PF02911">
    <property type="entry name" value="Formyl_trans_C"/>
    <property type="match status" value="1"/>
</dbReference>
<dbReference type="Pfam" id="PF00551">
    <property type="entry name" value="Formyl_trans_N"/>
    <property type="match status" value="1"/>
</dbReference>
<dbReference type="SUPFAM" id="SSF50486">
    <property type="entry name" value="FMT C-terminal domain-like"/>
    <property type="match status" value="1"/>
</dbReference>
<dbReference type="SUPFAM" id="SSF53328">
    <property type="entry name" value="Formyltransferase"/>
    <property type="match status" value="1"/>
</dbReference>
<dbReference type="PROSITE" id="PS00373">
    <property type="entry name" value="GART"/>
    <property type="match status" value="1"/>
</dbReference>
<comment type="function">
    <text evidence="1">Attaches a formyl group to the free amino group of methionyl-tRNA(fMet). The formyl group appears to play a dual role in the initiator identity of N-formylmethionyl-tRNA by promoting its recognition by IF2 and preventing the misappropriation of this tRNA by the elongation apparatus.</text>
</comment>
<comment type="catalytic activity">
    <reaction evidence="1">
        <text>L-methionyl-tRNA(fMet) + (6R)-10-formyltetrahydrofolate = N-formyl-L-methionyl-tRNA(fMet) + (6S)-5,6,7,8-tetrahydrofolate + H(+)</text>
        <dbReference type="Rhea" id="RHEA:24380"/>
        <dbReference type="Rhea" id="RHEA-COMP:9952"/>
        <dbReference type="Rhea" id="RHEA-COMP:9953"/>
        <dbReference type="ChEBI" id="CHEBI:15378"/>
        <dbReference type="ChEBI" id="CHEBI:57453"/>
        <dbReference type="ChEBI" id="CHEBI:78530"/>
        <dbReference type="ChEBI" id="CHEBI:78844"/>
        <dbReference type="ChEBI" id="CHEBI:195366"/>
        <dbReference type="EC" id="2.1.2.9"/>
    </reaction>
</comment>
<comment type="similarity">
    <text evidence="1">Belongs to the Fmt family.</text>
</comment>
<organism>
    <name type="scientific">Rubrobacter xylanophilus (strain DSM 9941 / JCM 11954 / NBRC 16129 / PRD-1)</name>
    <dbReference type="NCBI Taxonomy" id="266117"/>
    <lineage>
        <taxon>Bacteria</taxon>
        <taxon>Bacillati</taxon>
        <taxon>Actinomycetota</taxon>
        <taxon>Rubrobacteria</taxon>
        <taxon>Rubrobacterales</taxon>
        <taxon>Rubrobacteraceae</taxon>
        <taxon>Rubrobacter</taxon>
    </lineage>
</organism>
<proteinExistence type="inferred from homology"/>
<sequence>MRVAFAGTPEFAATVLRGLLGSGHEVGLVISQPDAPRGRGRRTASPPVALLAREAGLPLLQPASISEAAGEISRHDALVVAAYGQILRPDTLYAARHGAYNVHASLLPAYRGAAPVERAIMDGERETGVTVIRMDEGLDTGPVALQRRVPIPPDMTGGELADLLARVGAEALVEVLDRLESGTLNLTRQDSSRASYAPRITRQDQEIDWSRDARRVHDQVRALSPHIGARTRHPEVEGPLKIWRTRVHREAGRELAPGELRAGDGRLFVGCESGVVEILELQLPGGRRLGAAEFLRGHSLTGALRR</sequence>
<feature type="chain" id="PRO_1000020149" description="Methionyl-tRNA formyltransferase">
    <location>
        <begin position="1"/>
        <end position="306"/>
    </location>
</feature>
<feature type="binding site" evidence="1">
    <location>
        <begin position="105"/>
        <end position="108"/>
    </location>
    <ligand>
        <name>(6S)-5,6,7,8-tetrahydrofolate</name>
        <dbReference type="ChEBI" id="CHEBI:57453"/>
    </ligand>
</feature>